<protein>
    <recommendedName>
        <fullName evidence="1">Adenylosuccinate synthetase</fullName>
        <shortName evidence="1">AMPSase</shortName>
        <shortName evidence="1">AdSS</shortName>
        <ecNumber evidence="1">6.3.4.4</ecNumber>
    </recommendedName>
    <alternativeName>
        <fullName evidence="1">IMP--aspartate ligase</fullName>
    </alternativeName>
</protein>
<gene>
    <name evidence="1" type="primary">purA</name>
    <name type="ordered locus">Msil_1007</name>
</gene>
<accession>B8EK29</accession>
<keyword id="KW-0963">Cytoplasm</keyword>
<keyword id="KW-0342">GTP-binding</keyword>
<keyword id="KW-0436">Ligase</keyword>
<keyword id="KW-0460">Magnesium</keyword>
<keyword id="KW-0479">Metal-binding</keyword>
<keyword id="KW-0547">Nucleotide-binding</keyword>
<keyword id="KW-0658">Purine biosynthesis</keyword>
<keyword id="KW-1185">Reference proteome</keyword>
<evidence type="ECO:0000255" key="1">
    <source>
        <dbReference type="HAMAP-Rule" id="MF_00011"/>
    </source>
</evidence>
<comment type="function">
    <text evidence="1">Plays an important role in the de novo pathway of purine nucleotide biosynthesis. Catalyzes the first committed step in the biosynthesis of AMP from IMP.</text>
</comment>
<comment type="catalytic activity">
    <reaction evidence="1">
        <text>IMP + L-aspartate + GTP = N(6)-(1,2-dicarboxyethyl)-AMP + GDP + phosphate + 2 H(+)</text>
        <dbReference type="Rhea" id="RHEA:15753"/>
        <dbReference type="ChEBI" id="CHEBI:15378"/>
        <dbReference type="ChEBI" id="CHEBI:29991"/>
        <dbReference type="ChEBI" id="CHEBI:37565"/>
        <dbReference type="ChEBI" id="CHEBI:43474"/>
        <dbReference type="ChEBI" id="CHEBI:57567"/>
        <dbReference type="ChEBI" id="CHEBI:58053"/>
        <dbReference type="ChEBI" id="CHEBI:58189"/>
        <dbReference type="EC" id="6.3.4.4"/>
    </reaction>
</comment>
<comment type="cofactor">
    <cofactor evidence="1">
        <name>Mg(2+)</name>
        <dbReference type="ChEBI" id="CHEBI:18420"/>
    </cofactor>
    <text evidence="1">Binds 1 Mg(2+) ion per subunit.</text>
</comment>
<comment type="pathway">
    <text evidence="1">Purine metabolism; AMP biosynthesis via de novo pathway; AMP from IMP: step 1/2.</text>
</comment>
<comment type="subunit">
    <text evidence="1">Homodimer.</text>
</comment>
<comment type="subcellular location">
    <subcellularLocation>
        <location evidence="1">Cytoplasm</location>
    </subcellularLocation>
</comment>
<comment type="similarity">
    <text evidence="1">Belongs to the adenylosuccinate synthetase family.</text>
</comment>
<reference key="1">
    <citation type="journal article" date="2010" name="J. Bacteriol.">
        <title>Complete genome sequence of the aerobic facultative methanotroph Methylocella silvestris BL2.</title>
        <authorList>
            <person name="Chen Y."/>
            <person name="Crombie A."/>
            <person name="Rahman M.T."/>
            <person name="Dedysh S.N."/>
            <person name="Liesack W."/>
            <person name="Stott M.B."/>
            <person name="Alam M."/>
            <person name="Theisen A.R."/>
            <person name="Murrell J.C."/>
            <person name="Dunfield P.F."/>
        </authorList>
    </citation>
    <scope>NUCLEOTIDE SEQUENCE [LARGE SCALE GENOMIC DNA]</scope>
    <source>
        <strain>DSM 15510 / CIP 108128 / LMG 27833 / NCIMB 13906 / BL2</strain>
    </source>
</reference>
<organism>
    <name type="scientific">Methylocella silvestris (strain DSM 15510 / CIP 108128 / LMG 27833 / NCIMB 13906 / BL2)</name>
    <dbReference type="NCBI Taxonomy" id="395965"/>
    <lineage>
        <taxon>Bacteria</taxon>
        <taxon>Pseudomonadati</taxon>
        <taxon>Pseudomonadota</taxon>
        <taxon>Alphaproteobacteria</taxon>
        <taxon>Hyphomicrobiales</taxon>
        <taxon>Beijerinckiaceae</taxon>
        <taxon>Methylocella</taxon>
    </lineage>
</organism>
<proteinExistence type="inferred from homology"/>
<name>PURA_METSB</name>
<feature type="chain" id="PRO_1000194766" description="Adenylosuccinate synthetase">
    <location>
        <begin position="1"/>
        <end position="431"/>
    </location>
</feature>
<feature type="active site" description="Proton acceptor" evidence="1">
    <location>
        <position position="13"/>
    </location>
</feature>
<feature type="active site" description="Proton donor" evidence="1">
    <location>
        <position position="41"/>
    </location>
</feature>
<feature type="binding site" evidence="1">
    <location>
        <begin position="12"/>
        <end position="18"/>
    </location>
    <ligand>
        <name>GTP</name>
        <dbReference type="ChEBI" id="CHEBI:37565"/>
    </ligand>
</feature>
<feature type="binding site" description="in other chain" evidence="1">
    <location>
        <begin position="13"/>
        <end position="16"/>
    </location>
    <ligand>
        <name>IMP</name>
        <dbReference type="ChEBI" id="CHEBI:58053"/>
        <note>ligand shared between dimeric partners</note>
    </ligand>
</feature>
<feature type="binding site" evidence="1">
    <location>
        <position position="13"/>
    </location>
    <ligand>
        <name>Mg(2+)</name>
        <dbReference type="ChEBI" id="CHEBI:18420"/>
    </ligand>
</feature>
<feature type="binding site" description="in other chain" evidence="1">
    <location>
        <begin position="38"/>
        <end position="41"/>
    </location>
    <ligand>
        <name>IMP</name>
        <dbReference type="ChEBI" id="CHEBI:58053"/>
        <note>ligand shared between dimeric partners</note>
    </ligand>
</feature>
<feature type="binding site" evidence="1">
    <location>
        <begin position="40"/>
        <end position="42"/>
    </location>
    <ligand>
        <name>GTP</name>
        <dbReference type="ChEBI" id="CHEBI:37565"/>
    </ligand>
</feature>
<feature type="binding site" evidence="1">
    <location>
        <position position="40"/>
    </location>
    <ligand>
        <name>Mg(2+)</name>
        <dbReference type="ChEBI" id="CHEBI:18420"/>
    </ligand>
</feature>
<feature type="binding site" description="in other chain" evidence="1">
    <location>
        <position position="131"/>
    </location>
    <ligand>
        <name>IMP</name>
        <dbReference type="ChEBI" id="CHEBI:58053"/>
        <note>ligand shared between dimeric partners</note>
    </ligand>
</feature>
<feature type="binding site" evidence="1">
    <location>
        <position position="145"/>
    </location>
    <ligand>
        <name>IMP</name>
        <dbReference type="ChEBI" id="CHEBI:58053"/>
        <note>ligand shared between dimeric partners</note>
    </ligand>
</feature>
<feature type="binding site" description="in other chain" evidence="1">
    <location>
        <position position="225"/>
    </location>
    <ligand>
        <name>IMP</name>
        <dbReference type="ChEBI" id="CHEBI:58053"/>
        <note>ligand shared between dimeric partners</note>
    </ligand>
</feature>
<feature type="binding site" description="in other chain" evidence="1">
    <location>
        <position position="240"/>
    </location>
    <ligand>
        <name>IMP</name>
        <dbReference type="ChEBI" id="CHEBI:58053"/>
        <note>ligand shared between dimeric partners</note>
    </ligand>
</feature>
<feature type="binding site" evidence="1">
    <location>
        <begin position="300"/>
        <end position="306"/>
    </location>
    <ligand>
        <name>substrate</name>
    </ligand>
</feature>
<feature type="binding site" description="in other chain" evidence="1">
    <location>
        <position position="304"/>
    </location>
    <ligand>
        <name>IMP</name>
        <dbReference type="ChEBI" id="CHEBI:58053"/>
        <note>ligand shared between dimeric partners</note>
    </ligand>
</feature>
<feature type="binding site" evidence="1">
    <location>
        <position position="306"/>
    </location>
    <ligand>
        <name>GTP</name>
        <dbReference type="ChEBI" id="CHEBI:37565"/>
    </ligand>
</feature>
<feature type="binding site" evidence="1">
    <location>
        <begin position="332"/>
        <end position="334"/>
    </location>
    <ligand>
        <name>GTP</name>
        <dbReference type="ChEBI" id="CHEBI:37565"/>
    </ligand>
</feature>
<feature type="binding site" evidence="1">
    <location>
        <begin position="414"/>
        <end position="416"/>
    </location>
    <ligand>
        <name>GTP</name>
        <dbReference type="ChEBI" id="CHEBI:37565"/>
    </ligand>
</feature>
<sequence length="431" mass="46510">MANVVVVGAQWGDEGKGKIVDWLSIEADIVVRFQGGHNAGHTLVIGNQVYKLALLPSGIVRPGKLSVIGNGVVLDPHHLVDEIAKISAQGVTVTPDNLKIADNVTLILALHRELDAHRESASVAGVKIGTTKRGIGPAYEDKVGRRAIRLMDLAEPDSLDEKIDRLLAHHDPLRRGLGLEPVPRAAIRAELEDVAPKVLPYMDAVWDLLETARRDGKRILFEGAQGALLDVDHGTYPFVTSSNTVAANAATGSGLGPKAIGYVLGIAKAYTTRVGGGPFPTELHDETGQRLGDRGHEFGTNTGRRRRCGWFDAVLVRQTVKTSGIDGIALTKLDILDGFEEIKVCVGYLLDGERINRFPASQAAQARVTPIYETMEGWAGTTAGARSWAELPAQAIKYVRRIEELIEAPVALLSTSPQRADTILVHNPFRD</sequence>
<dbReference type="EC" id="6.3.4.4" evidence="1"/>
<dbReference type="EMBL" id="CP001280">
    <property type="protein sequence ID" value="ACK49976.1"/>
    <property type="molecule type" value="Genomic_DNA"/>
</dbReference>
<dbReference type="RefSeq" id="WP_012590046.1">
    <property type="nucleotide sequence ID" value="NC_011666.1"/>
</dbReference>
<dbReference type="SMR" id="B8EK29"/>
<dbReference type="STRING" id="395965.Msil_1007"/>
<dbReference type="KEGG" id="msl:Msil_1007"/>
<dbReference type="eggNOG" id="COG0104">
    <property type="taxonomic scope" value="Bacteria"/>
</dbReference>
<dbReference type="HOGENOM" id="CLU_029848_0_0_5"/>
<dbReference type="OrthoDB" id="9807553at2"/>
<dbReference type="UniPathway" id="UPA00075">
    <property type="reaction ID" value="UER00335"/>
</dbReference>
<dbReference type="Proteomes" id="UP000002257">
    <property type="component" value="Chromosome"/>
</dbReference>
<dbReference type="GO" id="GO:0005737">
    <property type="term" value="C:cytoplasm"/>
    <property type="evidence" value="ECO:0007669"/>
    <property type="project" value="UniProtKB-SubCell"/>
</dbReference>
<dbReference type="GO" id="GO:0004019">
    <property type="term" value="F:adenylosuccinate synthase activity"/>
    <property type="evidence" value="ECO:0007669"/>
    <property type="project" value="UniProtKB-UniRule"/>
</dbReference>
<dbReference type="GO" id="GO:0005525">
    <property type="term" value="F:GTP binding"/>
    <property type="evidence" value="ECO:0007669"/>
    <property type="project" value="UniProtKB-UniRule"/>
</dbReference>
<dbReference type="GO" id="GO:0000287">
    <property type="term" value="F:magnesium ion binding"/>
    <property type="evidence" value="ECO:0007669"/>
    <property type="project" value="UniProtKB-UniRule"/>
</dbReference>
<dbReference type="GO" id="GO:0044208">
    <property type="term" value="P:'de novo' AMP biosynthetic process"/>
    <property type="evidence" value="ECO:0007669"/>
    <property type="project" value="UniProtKB-UniRule"/>
</dbReference>
<dbReference type="GO" id="GO:0046040">
    <property type="term" value="P:IMP metabolic process"/>
    <property type="evidence" value="ECO:0007669"/>
    <property type="project" value="TreeGrafter"/>
</dbReference>
<dbReference type="CDD" id="cd03108">
    <property type="entry name" value="AdSS"/>
    <property type="match status" value="1"/>
</dbReference>
<dbReference type="FunFam" id="3.90.170.10:FF:000001">
    <property type="entry name" value="Adenylosuccinate synthetase"/>
    <property type="match status" value="1"/>
</dbReference>
<dbReference type="Gene3D" id="3.40.440.10">
    <property type="entry name" value="Adenylosuccinate Synthetase, subunit A, domain 1"/>
    <property type="match status" value="1"/>
</dbReference>
<dbReference type="Gene3D" id="1.10.300.10">
    <property type="entry name" value="Adenylosuccinate Synthetase, subunit A, domain 2"/>
    <property type="match status" value="1"/>
</dbReference>
<dbReference type="Gene3D" id="3.90.170.10">
    <property type="entry name" value="Adenylosuccinate Synthetase, subunit A, domain 3"/>
    <property type="match status" value="1"/>
</dbReference>
<dbReference type="HAMAP" id="MF_00011">
    <property type="entry name" value="Adenylosucc_synth"/>
    <property type="match status" value="1"/>
</dbReference>
<dbReference type="InterPro" id="IPR018220">
    <property type="entry name" value="Adenylosuccin_syn_GTP-bd"/>
</dbReference>
<dbReference type="InterPro" id="IPR033128">
    <property type="entry name" value="Adenylosuccin_syn_Lys_AS"/>
</dbReference>
<dbReference type="InterPro" id="IPR042109">
    <property type="entry name" value="Adenylosuccinate_synth_dom1"/>
</dbReference>
<dbReference type="InterPro" id="IPR042110">
    <property type="entry name" value="Adenylosuccinate_synth_dom2"/>
</dbReference>
<dbReference type="InterPro" id="IPR042111">
    <property type="entry name" value="Adenylosuccinate_synth_dom3"/>
</dbReference>
<dbReference type="InterPro" id="IPR001114">
    <property type="entry name" value="Adenylosuccinate_synthetase"/>
</dbReference>
<dbReference type="InterPro" id="IPR027417">
    <property type="entry name" value="P-loop_NTPase"/>
</dbReference>
<dbReference type="NCBIfam" id="NF002223">
    <property type="entry name" value="PRK01117.1"/>
    <property type="match status" value="1"/>
</dbReference>
<dbReference type="NCBIfam" id="TIGR00184">
    <property type="entry name" value="purA"/>
    <property type="match status" value="1"/>
</dbReference>
<dbReference type="PANTHER" id="PTHR11846">
    <property type="entry name" value="ADENYLOSUCCINATE SYNTHETASE"/>
    <property type="match status" value="1"/>
</dbReference>
<dbReference type="PANTHER" id="PTHR11846:SF0">
    <property type="entry name" value="ADENYLOSUCCINATE SYNTHETASE"/>
    <property type="match status" value="1"/>
</dbReference>
<dbReference type="Pfam" id="PF00709">
    <property type="entry name" value="Adenylsucc_synt"/>
    <property type="match status" value="1"/>
</dbReference>
<dbReference type="SMART" id="SM00788">
    <property type="entry name" value="Adenylsucc_synt"/>
    <property type="match status" value="1"/>
</dbReference>
<dbReference type="SUPFAM" id="SSF52540">
    <property type="entry name" value="P-loop containing nucleoside triphosphate hydrolases"/>
    <property type="match status" value="1"/>
</dbReference>
<dbReference type="PROSITE" id="PS01266">
    <property type="entry name" value="ADENYLOSUCCIN_SYN_1"/>
    <property type="match status" value="1"/>
</dbReference>
<dbReference type="PROSITE" id="PS00513">
    <property type="entry name" value="ADENYLOSUCCIN_SYN_2"/>
    <property type="match status" value="1"/>
</dbReference>